<comment type="function">
    <text evidence="1">Mitochondrial membrane ATP synthase (F(1)F(0) ATP synthase or Complex V) produces ATP from ADP in the presence of a proton gradient across the membrane which is generated by electron transport complexes of the respiratory chain. F-type ATPases consist of two structural domains, F(1) - containing the extramembraneous catalytic core and F(0) - containing the membrane proton channel, linked together by a central stalk and a peripheral stalk. During catalysis, ATP synthesis in the catalytic domain of F(1) is coupled via a rotary mechanism of the central stalk subunits to proton translocation. Part of the complex F(0) domain. Minor subunit located with subunit a in the membrane (By similarity).</text>
</comment>
<comment type="subunit">
    <text evidence="1">F-type ATPases have 2 components, CF(1) - the catalytic core - and CF(0) - the membrane proton channel.</text>
</comment>
<comment type="subcellular location">
    <subcellularLocation>
        <location>Mitochondrion membrane</location>
        <topology>Single-pass membrane protein</topology>
    </subcellularLocation>
</comment>
<comment type="similarity">
    <text evidence="3">Belongs to the ATPase protein 8 family.</text>
</comment>
<name>ATP8_RHISA</name>
<protein>
    <recommendedName>
        <fullName>ATP synthase protein 8</fullName>
    </recommendedName>
    <alternativeName>
        <fullName>A6L</fullName>
    </alternativeName>
    <alternativeName>
        <fullName>F-ATPase subunit 8</fullName>
    </alternativeName>
</protein>
<keyword id="KW-0066">ATP synthesis</keyword>
<keyword id="KW-0138">CF(0)</keyword>
<keyword id="KW-0375">Hydrogen ion transport</keyword>
<keyword id="KW-0406">Ion transport</keyword>
<keyword id="KW-0472">Membrane</keyword>
<keyword id="KW-0496">Mitochondrion</keyword>
<keyword id="KW-0812">Transmembrane</keyword>
<keyword id="KW-1133">Transmembrane helix</keyword>
<keyword id="KW-0813">Transport</keyword>
<organism>
    <name type="scientific">Rhipicephalus sanguineus</name>
    <name type="common">Brown dog tick</name>
    <name type="synonym">Ixodes sanguineus</name>
    <dbReference type="NCBI Taxonomy" id="34632"/>
    <lineage>
        <taxon>Eukaryota</taxon>
        <taxon>Metazoa</taxon>
        <taxon>Ecdysozoa</taxon>
        <taxon>Arthropoda</taxon>
        <taxon>Chelicerata</taxon>
        <taxon>Arachnida</taxon>
        <taxon>Acari</taxon>
        <taxon>Parasitiformes</taxon>
        <taxon>Ixodida</taxon>
        <taxon>Ixodoidea</taxon>
        <taxon>Ixodidae</taxon>
        <taxon>Rhipicephalinae</taxon>
        <taxon>Rhipicephalus</taxon>
        <taxon>Rhipicephalus</taxon>
    </lineage>
</organism>
<feature type="chain" id="PRO_0000195580" description="ATP synthase protein 8">
    <location>
        <begin position="1"/>
        <end position="52"/>
    </location>
</feature>
<feature type="transmembrane region" description="Helical" evidence="2">
    <location>
        <begin position="10"/>
        <end position="30"/>
    </location>
</feature>
<sequence>MPQIFPMNWFLMSLMIMMILIFMTINFYFFSMKMPNKNMFNLNKKTKYNFKW</sequence>
<gene>
    <name type="primary">MT-ATP8</name>
    <name type="synonym">ATP8</name>
    <name type="synonym">ATPASE8</name>
    <name type="synonym">MTATP8</name>
</gene>
<proteinExistence type="inferred from homology"/>
<dbReference type="EMBL" id="AF081829">
    <property type="protein sequence ID" value="AAD05520.1"/>
    <property type="molecule type" value="Genomic_DNA"/>
</dbReference>
<dbReference type="PIR" id="T11156">
    <property type="entry name" value="T11156"/>
</dbReference>
<dbReference type="RefSeq" id="NP_008513.1">
    <property type="nucleotide sequence ID" value="NC_002074.1"/>
</dbReference>
<dbReference type="SMR" id="O99820"/>
<dbReference type="GeneID" id="808370"/>
<dbReference type="KEGG" id="rsan:808370"/>
<dbReference type="CTD" id="4509"/>
<dbReference type="GO" id="GO:0031966">
    <property type="term" value="C:mitochondrial membrane"/>
    <property type="evidence" value="ECO:0007669"/>
    <property type="project" value="UniProtKB-SubCell"/>
</dbReference>
<dbReference type="GO" id="GO:0045259">
    <property type="term" value="C:proton-transporting ATP synthase complex"/>
    <property type="evidence" value="ECO:0007669"/>
    <property type="project" value="UniProtKB-KW"/>
</dbReference>
<dbReference type="GO" id="GO:0006754">
    <property type="term" value="P:ATP biosynthetic process"/>
    <property type="evidence" value="ECO:0007669"/>
    <property type="project" value="UniProtKB-KW"/>
</dbReference>
<dbReference type="GO" id="GO:1902600">
    <property type="term" value="P:proton transmembrane transport"/>
    <property type="evidence" value="ECO:0007669"/>
    <property type="project" value="UniProtKB-KW"/>
</dbReference>
<geneLocation type="mitochondrion"/>
<accession>O99820</accession>
<evidence type="ECO:0000250" key="1"/>
<evidence type="ECO:0000255" key="2"/>
<evidence type="ECO:0000305" key="3"/>
<reference key="1">
    <citation type="journal article" date="1998" name="Mol. Biol. Evol.">
        <title>Mitochondrial gene order is not conserved in arthropods: prostriate and metastriate tick mitochondrial genomes.</title>
        <authorList>
            <person name="Black W.C. IV"/>
            <person name="Roehrdanz R.L."/>
        </authorList>
    </citation>
    <scope>NUCLEOTIDE SEQUENCE [GENOMIC DNA]</scope>
</reference>